<organism>
    <name type="scientific">Haemophilus influenzae (strain ATCC 51907 / DSM 11121 / KW20 / Rd)</name>
    <dbReference type="NCBI Taxonomy" id="71421"/>
    <lineage>
        <taxon>Bacteria</taxon>
        <taxon>Pseudomonadati</taxon>
        <taxon>Pseudomonadota</taxon>
        <taxon>Gammaproteobacteria</taxon>
        <taxon>Pasteurellales</taxon>
        <taxon>Pasteurellaceae</taxon>
        <taxon>Haemophilus</taxon>
    </lineage>
</organism>
<name>Y341_HAEIN</name>
<evidence type="ECO:0000305" key="1"/>
<protein>
    <recommendedName>
        <fullName>Uncharacterized protein HI_0341</fullName>
    </recommendedName>
</protein>
<gene>
    <name type="ordered locus">HI_0341</name>
</gene>
<dbReference type="EMBL" id="L42023">
    <property type="protein sequence ID" value="AAC22003.1"/>
    <property type="molecule type" value="Genomic_DNA"/>
</dbReference>
<dbReference type="PIR" id="G64148">
    <property type="entry name" value="G64148"/>
</dbReference>
<dbReference type="RefSeq" id="NP_438505.1">
    <property type="nucleotide sequence ID" value="NC_000907.1"/>
</dbReference>
<dbReference type="STRING" id="71421.HI_0341"/>
<dbReference type="EnsemblBacteria" id="AAC22003">
    <property type="protein sequence ID" value="AAC22003"/>
    <property type="gene ID" value="HI_0341"/>
</dbReference>
<dbReference type="KEGG" id="hin:HI_0341"/>
<dbReference type="PATRIC" id="fig|71421.8.peg.358"/>
<dbReference type="eggNOG" id="COG3171">
    <property type="taxonomic scope" value="Bacteria"/>
</dbReference>
<dbReference type="HOGENOM" id="CLU_153063_1_0_6"/>
<dbReference type="OrthoDB" id="9114861at2"/>
<dbReference type="PhylomeDB" id="P44649"/>
<dbReference type="BioCyc" id="HINF71421:G1GJ1-357-MONOMER"/>
<dbReference type="Proteomes" id="UP000000579">
    <property type="component" value="Chromosome"/>
</dbReference>
<dbReference type="GO" id="GO:0005829">
    <property type="term" value="C:cytosol"/>
    <property type="evidence" value="ECO:0000318"/>
    <property type="project" value="GO_Central"/>
</dbReference>
<dbReference type="InterPro" id="IPR007416">
    <property type="entry name" value="YggL_50S_bp"/>
</dbReference>
<dbReference type="NCBIfam" id="NF008685">
    <property type="entry name" value="PRK11702.1"/>
    <property type="match status" value="1"/>
</dbReference>
<dbReference type="PANTHER" id="PTHR38778:SF1">
    <property type="entry name" value="CYTOPLASMIC PROTEIN"/>
    <property type="match status" value="1"/>
</dbReference>
<dbReference type="PANTHER" id="PTHR38778">
    <property type="entry name" value="CYTOPLASMIC PROTEIN-RELATED"/>
    <property type="match status" value="1"/>
</dbReference>
<dbReference type="Pfam" id="PF04320">
    <property type="entry name" value="YggL_50S_bp"/>
    <property type="match status" value="1"/>
</dbReference>
<proteinExistence type="evidence at protein level"/>
<reference key="1">
    <citation type="journal article" date="1995" name="Science">
        <title>Whole-genome random sequencing and assembly of Haemophilus influenzae Rd.</title>
        <authorList>
            <person name="Fleischmann R.D."/>
            <person name="Adams M.D."/>
            <person name="White O."/>
            <person name="Clayton R.A."/>
            <person name="Kirkness E.F."/>
            <person name="Kerlavage A.R."/>
            <person name="Bult C.J."/>
            <person name="Tomb J.-F."/>
            <person name="Dougherty B.A."/>
            <person name="Merrick J.M."/>
            <person name="McKenney K."/>
            <person name="Sutton G.G."/>
            <person name="FitzHugh W."/>
            <person name="Fields C.A."/>
            <person name="Gocayne J.D."/>
            <person name="Scott J.D."/>
            <person name="Shirley R."/>
            <person name="Liu L.-I."/>
            <person name="Glodek A."/>
            <person name="Kelley J.M."/>
            <person name="Weidman J.F."/>
            <person name="Phillips C.A."/>
            <person name="Spriggs T."/>
            <person name="Hedblom E."/>
            <person name="Cotton M.D."/>
            <person name="Utterback T.R."/>
            <person name="Hanna M.C."/>
            <person name="Nguyen D.T."/>
            <person name="Saudek D.M."/>
            <person name="Brandon R.C."/>
            <person name="Fine L.D."/>
            <person name="Fritchman J.L."/>
            <person name="Fuhrmann J.L."/>
            <person name="Geoghagen N.S.M."/>
            <person name="Gnehm C.L."/>
            <person name="McDonald L.A."/>
            <person name="Small K.V."/>
            <person name="Fraser C.M."/>
            <person name="Smith H.O."/>
            <person name="Venter J.C."/>
        </authorList>
    </citation>
    <scope>NUCLEOTIDE SEQUENCE [LARGE SCALE GENOMIC DNA]</scope>
    <source>
        <strain>ATCC 51907 / DSM 11121 / KW20 / Rd</strain>
    </source>
</reference>
<reference key="2">
    <citation type="journal article" date="2000" name="Electrophoresis">
        <title>Two-dimensional map of the proteome of Haemophilus influenzae.</title>
        <authorList>
            <person name="Langen H."/>
            <person name="Takacs B."/>
            <person name="Evers S."/>
            <person name="Berndt P."/>
            <person name="Lahm H.W."/>
            <person name="Wipf B."/>
            <person name="Gray C."/>
            <person name="Fountoulakis M."/>
        </authorList>
    </citation>
    <scope>IDENTIFICATION BY MASS SPECTROMETRY</scope>
    <source>
        <strain>ATCC 51907 / DSM 11121 / KW20 / Rd</strain>
    </source>
</reference>
<sequence length="114" mass="13385">MSKSYNQRQRKKLHLAEFQELGFLVNFQFAEGTAIETVDETVDRFINEVIQPNGLAYEGSGYLHWEGLVCLEKIGKCDESHRETVKKWLETNGLQQIEVSELFDIWWEYPTKVE</sequence>
<feature type="chain" id="PRO_0000169369" description="Uncharacterized protein HI_0341">
    <location>
        <begin position="1"/>
        <end position="114"/>
    </location>
</feature>
<keyword id="KW-1185">Reference proteome</keyword>
<comment type="similarity">
    <text evidence="1">To E.coli YggL.</text>
</comment>
<accession>P44649</accession>